<name>SAHH_GEOSL</name>
<organism>
    <name type="scientific">Geobacter sulfurreducens (strain ATCC 51573 / DSM 12127 / PCA)</name>
    <dbReference type="NCBI Taxonomy" id="243231"/>
    <lineage>
        <taxon>Bacteria</taxon>
        <taxon>Pseudomonadati</taxon>
        <taxon>Thermodesulfobacteriota</taxon>
        <taxon>Desulfuromonadia</taxon>
        <taxon>Geobacterales</taxon>
        <taxon>Geobacteraceae</taxon>
        <taxon>Geobacter</taxon>
    </lineage>
</organism>
<feature type="chain" id="PRO_0000116963" description="Adenosylhomocysteinase">
    <location>
        <begin position="1"/>
        <end position="475"/>
    </location>
</feature>
<feature type="binding site" evidence="1">
    <location>
        <position position="66"/>
    </location>
    <ligand>
        <name>substrate</name>
    </ligand>
</feature>
<feature type="binding site" evidence="1">
    <location>
        <position position="141"/>
    </location>
    <ligand>
        <name>substrate</name>
    </ligand>
</feature>
<feature type="binding site" evidence="1">
    <location>
        <position position="201"/>
    </location>
    <ligand>
        <name>substrate</name>
    </ligand>
</feature>
<feature type="binding site" evidence="1">
    <location>
        <begin position="202"/>
        <end position="204"/>
    </location>
    <ligand>
        <name>NAD(+)</name>
        <dbReference type="ChEBI" id="CHEBI:57540"/>
    </ligand>
</feature>
<feature type="binding site" evidence="1">
    <location>
        <position position="231"/>
    </location>
    <ligand>
        <name>substrate</name>
    </ligand>
</feature>
<feature type="binding site" evidence="1">
    <location>
        <position position="235"/>
    </location>
    <ligand>
        <name>substrate</name>
    </ligand>
</feature>
<feature type="binding site" evidence="1">
    <location>
        <position position="236"/>
    </location>
    <ligand>
        <name>NAD(+)</name>
        <dbReference type="ChEBI" id="CHEBI:57540"/>
    </ligand>
</feature>
<feature type="binding site" evidence="1">
    <location>
        <begin position="265"/>
        <end position="270"/>
    </location>
    <ligand>
        <name>NAD(+)</name>
        <dbReference type="ChEBI" id="CHEBI:57540"/>
    </ligand>
</feature>
<feature type="binding site" evidence="1">
    <location>
        <position position="288"/>
    </location>
    <ligand>
        <name>NAD(+)</name>
        <dbReference type="ChEBI" id="CHEBI:57540"/>
    </ligand>
</feature>
<feature type="binding site" evidence="1">
    <location>
        <position position="323"/>
    </location>
    <ligand>
        <name>NAD(+)</name>
        <dbReference type="ChEBI" id="CHEBI:57540"/>
    </ligand>
</feature>
<feature type="binding site" evidence="1">
    <location>
        <begin position="344"/>
        <end position="346"/>
    </location>
    <ligand>
        <name>NAD(+)</name>
        <dbReference type="ChEBI" id="CHEBI:57540"/>
    </ligand>
</feature>
<feature type="binding site" evidence="1">
    <location>
        <position position="389"/>
    </location>
    <ligand>
        <name>NAD(+)</name>
        <dbReference type="ChEBI" id="CHEBI:57540"/>
    </ligand>
</feature>
<protein>
    <recommendedName>
        <fullName evidence="1">Adenosylhomocysteinase</fullName>
        <ecNumber evidence="1">3.13.2.1</ecNumber>
    </recommendedName>
    <alternativeName>
        <fullName evidence="1">S-adenosyl-L-homocysteine hydrolase</fullName>
        <shortName evidence="1">AdoHcyase</shortName>
    </alternativeName>
</protein>
<gene>
    <name evidence="1" type="primary">ahcY</name>
    <name type="ordered locus">GSU1875</name>
</gene>
<evidence type="ECO:0000255" key="1">
    <source>
        <dbReference type="HAMAP-Rule" id="MF_00563"/>
    </source>
</evidence>
<sequence>MTQPVARDTAGTFSDYCISDISLAAWGRKEMIIAETEMPGLMAIREEYAATRPLQGARIAGSLHMTIQTAMLIETLVALGAEVRWASCNIFSTQDHAAAAIAAAGIPVFAYKGESLEEYWEFTHRIFEWHDGGTPNMILDDGGDATLLLHLGSDAEKDPSVIANPTCEEEQYLFASIKKRLAEKPGWYSKTAAAIKGVTEETTTGVHRLYQMHEKGKLKFPAINVNDSVTKSKFDNIYGCRESLVDGIKRATDVMIAGKVAVICGYGEVGKGCAQAMRGLQAQVWVTEIDPICALQAAMEGYRVVTMEYAADKADIFVTTTGNINVITHDHMKAMRHNAIVCNIGHFDNEIEVAALKQYQWENIKPQVDHIIFPDSKRIILLAEGRLVNLGCATGHPSYVMSSSFANQTLAQIELFCNPGKYPVGVYMLPKELDEKVARLQLKTLGAMLTELTDEQAAYIGVPKNGPYKSAHYRY</sequence>
<accession>P61617</accession>
<comment type="function">
    <text evidence="1">May play a key role in the regulation of the intracellular concentration of adenosylhomocysteine.</text>
</comment>
<comment type="catalytic activity">
    <reaction evidence="1">
        <text>S-adenosyl-L-homocysteine + H2O = L-homocysteine + adenosine</text>
        <dbReference type="Rhea" id="RHEA:21708"/>
        <dbReference type="ChEBI" id="CHEBI:15377"/>
        <dbReference type="ChEBI" id="CHEBI:16335"/>
        <dbReference type="ChEBI" id="CHEBI:57856"/>
        <dbReference type="ChEBI" id="CHEBI:58199"/>
        <dbReference type="EC" id="3.13.2.1"/>
    </reaction>
</comment>
<comment type="cofactor">
    <cofactor evidence="1">
        <name>NAD(+)</name>
        <dbReference type="ChEBI" id="CHEBI:57540"/>
    </cofactor>
    <text evidence="1">Binds 1 NAD(+) per subunit.</text>
</comment>
<comment type="pathway">
    <text evidence="1">Amino-acid biosynthesis; L-homocysteine biosynthesis; L-homocysteine from S-adenosyl-L-homocysteine: step 1/1.</text>
</comment>
<comment type="subcellular location">
    <subcellularLocation>
        <location evidence="1">Cytoplasm</location>
    </subcellularLocation>
</comment>
<comment type="similarity">
    <text evidence="1">Belongs to the adenosylhomocysteinase family.</text>
</comment>
<dbReference type="EC" id="3.13.2.1" evidence="1"/>
<dbReference type="EMBL" id="AE017180">
    <property type="protein sequence ID" value="AAR35251.1"/>
    <property type="molecule type" value="Genomic_DNA"/>
</dbReference>
<dbReference type="RefSeq" id="NP_952924.1">
    <property type="nucleotide sequence ID" value="NC_002939.5"/>
</dbReference>
<dbReference type="RefSeq" id="WP_010942520.1">
    <property type="nucleotide sequence ID" value="NC_002939.5"/>
</dbReference>
<dbReference type="SMR" id="P61617"/>
<dbReference type="STRING" id="243231.GSU1875"/>
<dbReference type="EnsemblBacteria" id="AAR35251">
    <property type="protein sequence ID" value="AAR35251"/>
    <property type="gene ID" value="GSU1875"/>
</dbReference>
<dbReference type="KEGG" id="gsu:GSU1875"/>
<dbReference type="PATRIC" id="fig|243231.5.peg.1913"/>
<dbReference type="eggNOG" id="COG0499">
    <property type="taxonomic scope" value="Bacteria"/>
</dbReference>
<dbReference type="HOGENOM" id="CLU_025194_2_1_7"/>
<dbReference type="InParanoid" id="P61617"/>
<dbReference type="OrthoDB" id="9802717at2"/>
<dbReference type="UniPathway" id="UPA00314">
    <property type="reaction ID" value="UER00076"/>
</dbReference>
<dbReference type="Proteomes" id="UP000000577">
    <property type="component" value="Chromosome"/>
</dbReference>
<dbReference type="GO" id="GO:0005829">
    <property type="term" value="C:cytosol"/>
    <property type="evidence" value="ECO:0000318"/>
    <property type="project" value="GO_Central"/>
</dbReference>
<dbReference type="GO" id="GO:0004013">
    <property type="term" value="F:adenosylhomocysteinase activity"/>
    <property type="evidence" value="ECO:0000318"/>
    <property type="project" value="GO_Central"/>
</dbReference>
<dbReference type="GO" id="GO:0071269">
    <property type="term" value="P:L-homocysteine biosynthetic process"/>
    <property type="evidence" value="ECO:0007669"/>
    <property type="project" value="UniProtKB-UniRule"/>
</dbReference>
<dbReference type="GO" id="GO:0006730">
    <property type="term" value="P:one-carbon metabolic process"/>
    <property type="evidence" value="ECO:0007669"/>
    <property type="project" value="UniProtKB-KW"/>
</dbReference>
<dbReference type="GO" id="GO:0033353">
    <property type="term" value="P:S-adenosylmethionine cycle"/>
    <property type="evidence" value="ECO:0000318"/>
    <property type="project" value="GO_Central"/>
</dbReference>
<dbReference type="CDD" id="cd00401">
    <property type="entry name" value="SAHH"/>
    <property type="match status" value="1"/>
</dbReference>
<dbReference type="FunFam" id="3.40.50.720:FF:000004">
    <property type="entry name" value="Adenosylhomocysteinase"/>
    <property type="match status" value="1"/>
</dbReference>
<dbReference type="Gene3D" id="3.40.50.1480">
    <property type="entry name" value="Adenosylhomocysteinase-like"/>
    <property type="match status" value="1"/>
</dbReference>
<dbReference type="Gene3D" id="3.40.50.720">
    <property type="entry name" value="NAD(P)-binding Rossmann-like Domain"/>
    <property type="match status" value="1"/>
</dbReference>
<dbReference type="HAMAP" id="MF_00563">
    <property type="entry name" value="AdoHcyase"/>
    <property type="match status" value="1"/>
</dbReference>
<dbReference type="InterPro" id="IPR042172">
    <property type="entry name" value="Adenosylhomocyst_ase-like_sf"/>
</dbReference>
<dbReference type="InterPro" id="IPR000043">
    <property type="entry name" value="Adenosylhomocysteinase-like"/>
</dbReference>
<dbReference type="InterPro" id="IPR015878">
    <property type="entry name" value="Ado_hCys_hydrolase_NAD-bd"/>
</dbReference>
<dbReference type="InterPro" id="IPR036291">
    <property type="entry name" value="NAD(P)-bd_dom_sf"/>
</dbReference>
<dbReference type="InterPro" id="IPR020082">
    <property type="entry name" value="S-Ado-L-homoCys_hydrolase_CS"/>
</dbReference>
<dbReference type="NCBIfam" id="TIGR00936">
    <property type="entry name" value="ahcY"/>
    <property type="match status" value="1"/>
</dbReference>
<dbReference type="NCBIfam" id="NF004005">
    <property type="entry name" value="PRK05476.2-3"/>
    <property type="match status" value="1"/>
</dbReference>
<dbReference type="PANTHER" id="PTHR23420">
    <property type="entry name" value="ADENOSYLHOMOCYSTEINASE"/>
    <property type="match status" value="1"/>
</dbReference>
<dbReference type="PANTHER" id="PTHR23420:SF0">
    <property type="entry name" value="ADENOSYLHOMOCYSTEINASE"/>
    <property type="match status" value="1"/>
</dbReference>
<dbReference type="Pfam" id="PF05221">
    <property type="entry name" value="AdoHcyase"/>
    <property type="match status" value="1"/>
</dbReference>
<dbReference type="Pfam" id="PF00670">
    <property type="entry name" value="AdoHcyase_NAD"/>
    <property type="match status" value="1"/>
</dbReference>
<dbReference type="PIRSF" id="PIRSF001109">
    <property type="entry name" value="Ad_hcy_hydrolase"/>
    <property type="match status" value="1"/>
</dbReference>
<dbReference type="SMART" id="SM00996">
    <property type="entry name" value="AdoHcyase"/>
    <property type="match status" value="1"/>
</dbReference>
<dbReference type="SMART" id="SM00997">
    <property type="entry name" value="AdoHcyase_NAD"/>
    <property type="match status" value="1"/>
</dbReference>
<dbReference type="SUPFAM" id="SSF52283">
    <property type="entry name" value="Formate/glycerate dehydrogenase catalytic domain-like"/>
    <property type="match status" value="1"/>
</dbReference>
<dbReference type="SUPFAM" id="SSF51735">
    <property type="entry name" value="NAD(P)-binding Rossmann-fold domains"/>
    <property type="match status" value="1"/>
</dbReference>
<dbReference type="PROSITE" id="PS00738">
    <property type="entry name" value="ADOHCYASE_1"/>
    <property type="match status" value="1"/>
</dbReference>
<dbReference type="PROSITE" id="PS00739">
    <property type="entry name" value="ADOHCYASE_2"/>
    <property type="match status" value="1"/>
</dbReference>
<keyword id="KW-0963">Cytoplasm</keyword>
<keyword id="KW-0378">Hydrolase</keyword>
<keyword id="KW-0520">NAD</keyword>
<keyword id="KW-0554">One-carbon metabolism</keyword>
<keyword id="KW-1185">Reference proteome</keyword>
<proteinExistence type="inferred from homology"/>
<reference key="1">
    <citation type="journal article" date="2003" name="Science">
        <title>Genome of Geobacter sulfurreducens: metal reduction in subsurface environments.</title>
        <authorList>
            <person name="Methe B.A."/>
            <person name="Nelson K.E."/>
            <person name="Eisen J.A."/>
            <person name="Paulsen I.T."/>
            <person name="Nelson W.C."/>
            <person name="Heidelberg J.F."/>
            <person name="Wu D."/>
            <person name="Wu M."/>
            <person name="Ward N.L."/>
            <person name="Beanan M.J."/>
            <person name="Dodson R.J."/>
            <person name="Madupu R."/>
            <person name="Brinkac L.M."/>
            <person name="Daugherty S.C."/>
            <person name="DeBoy R.T."/>
            <person name="Durkin A.S."/>
            <person name="Gwinn M.L."/>
            <person name="Kolonay J.F."/>
            <person name="Sullivan S.A."/>
            <person name="Haft D.H."/>
            <person name="Selengut J."/>
            <person name="Davidsen T.M."/>
            <person name="Zafar N."/>
            <person name="White O."/>
            <person name="Tran B."/>
            <person name="Romero C."/>
            <person name="Forberger H.A."/>
            <person name="Weidman J.F."/>
            <person name="Khouri H.M."/>
            <person name="Feldblyum T.V."/>
            <person name="Utterback T.R."/>
            <person name="Van Aken S.E."/>
            <person name="Lovley D.R."/>
            <person name="Fraser C.M."/>
        </authorList>
    </citation>
    <scope>NUCLEOTIDE SEQUENCE [LARGE SCALE GENOMIC DNA]</scope>
    <source>
        <strain>ATCC 51573 / DSM 12127 / PCA</strain>
    </source>
</reference>